<gene>
    <name evidence="1" type="primary">apt</name>
    <name type="ordered locus">PMT9312_1133</name>
</gene>
<reference key="1">
    <citation type="journal article" date="2006" name="Science">
        <title>Genomic islands and the ecology and evolution of Prochlorococcus.</title>
        <authorList>
            <person name="Coleman M.L."/>
            <person name="Sullivan M.B."/>
            <person name="Martiny A.C."/>
            <person name="Steglich C."/>
            <person name="Barry K."/>
            <person name="Delong E.F."/>
            <person name="Chisholm S.W."/>
        </authorList>
    </citation>
    <scope>NUCLEOTIDE SEQUENCE [LARGE SCALE GENOMIC DNA]</scope>
    <source>
        <strain>MIT 9312</strain>
    </source>
</reference>
<proteinExistence type="inferred from homology"/>
<protein>
    <recommendedName>
        <fullName evidence="1">Adenine phosphoribosyltransferase</fullName>
        <shortName evidence="1">APRT</shortName>
        <ecNumber evidence="1">2.4.2.7</ecNumber>
    </recommendedName>
</protein>
<organism>
    <name type="scientific">Prochlorococcus marinus (strain MIT 9312)</name>
    <dbReference type="NCBI Taxonomy" id="74546"/>
    <lineage>
        <taxon>Bacteria</taxon>
        <taxon>Bacillati</taxon>
        <taxon>Cyanobacteriota</taxon>
        <taxon>Cyanophyceae</taxon>
        <taxon>Synechococcales</taxon>
        <taxon>Prochlorococcaceae</taxon>
        <taxon>Prochlorococcus</taxon>
    </lineage>
</organism>
<sequence length="170" mass="18827">MEKLEKLISTYENYPKAGVSFKDVIEIVQHPSIFRQLILEMAKSKIIKEAEALISIDARGFIFGSAISIQAAKPMIVARKPGKLPGELVTKKYSLEYGENSLSIQKKALKKYNSFAIIDDLLATGGTVNCVSELINNNNKKVVGLLVVAELSKFDGRSRFNFPVESSILF</sequence>
<name>APT_PROM9</name>
<keyword id="KW-0963">Cytoplasm</keyword>
<keyword id="KW-0328">Glycosyltransferase</keyword>
<keyword id="KW-0660">Purine salvage</keyword>
<keyword id="KW-0808">Transferase</keyword>
<dbReference type="EC" id="2.4.2.7" evidence="1"/>
<dbReference type="EMBL" id="CP000111">
    <property type="protein sequence ID" value="ABB50192.1"/>
    <property type="molecule type" value="Genomic_DNA"/>
</dbReference>
<dbReference type="RefSeq" id="WP_011376683.1">
    <property type="nucleotide sequence ID" value="NC_007577.1"/>
</dbReference>
<dbReference type="SMR" id="Q31AA3"/>
<dbReference type="STRING" id="74546.PMT9312_1133"/>
<dbReference type="KEGG" id="pmi:PMT9312_1133"/>
<dbReference type="eggNOG" id="COG0503">
    <property type="taxonomic scope" value="Bacteria"/>
</dbReference>
<dbReference type="HOGENOM" id="CLU_063339_3_3_3"/>
<dbReference type="OrthoDB" id="9803963at2"/>
<dbReference type="UniPathway" id="UPA00588">
    <property type="reaction ID" value="UER00646"/>
</dbReference>
<dbReference type="Proteomes" id="UP000002715">
    <property type="component" value="Chromosome"/>
</dbReference>
<dbReference type="GO" id="GO:0005737">
    <property type="term" value="C:cytoplasm"/>
    <property type="evidence" value="ECO:0007669"/>
    <property type="project" value="UniProtKB-SubCell"/>
</dbReference>
<dbReference type="GO" id="GO:0002055">
    <property type="term" value="F:adenine binding"/>
    <property type="evidence" value="ECO:0007669"/>
    <property type="project" value="TreeGrafter"/>
</dbReference>
<dbReference type="GO" id="GO:0003999">
    <property type="term" value="F:adenine phosphoribosyltransferase activity"/>
    <property type="evidence" value="ECO:0007669"/>
    <property type="project" value="UniProtKB-UniRule"/>
</dbReference>
<dbReference type="GO" id="GO:0016208">
    <property type="term" value="F:AMP binding"/>
    <property type="evidence" value="ECO:0007669"/>
    <property type="project" value="TreeGrafter"/>
</dbReference>
<dbReference type="GO" id="GO:0006168">
    <property type="term" value="P:adenine salvage"/>
    <property type="evidence" value="ECO:0007669"/>
    <property type="project" value="InterPro"/>
</dbReference>
<dbReference type="GO" id="GO:0044209">
    <property type="term" value="P:AMP salvage"/>
    <property type="evidence" value="ECO:0007669"/>
    <property type="project" value="UniProtKB-UniRule"/>
</dbReference>
<dbReference type="GO" id="GO:0006166">
    <property type="term" value="P:purine ribonucleoside salvage"/>
    <property type="evidence" value="ECO:0007669"/>
    <property type="project" value="UniProtKB-KW"/>
</dbReference>
<dbReference type="CDD" id="cd06223">
    <property type="entry name" value="PRTases_typeI"/>
    <property type="match status" value="1"/>
</dbReference>
<dbReference type="FunFam" id="3.40.50.2020:FF:000004">
    <property type="entry name" value="Adenine phosphoribosyltransferase"/>
    <property type="match status" value="1"/>
</dbReference>
<dbReference type="Gene3D" id="3.40.50.2020">
    <property type="match status" value="1"/>
</dbReference>
<dbReference type="HAMAP" id="MF_00004">
    <property type="entry name" value="Aden_phosphoribosyltr"/>
    <property type="match status" value="1"/>
</dbReference>
<dbReference type="InterPro" id="IPR005764">
    <property type="entry name" value="Ade_phspho_trans"/>
</dbReference>
<dbReference type="InterPro" id="IPR000836">
    <property type="entry name" value="PRibTrfase_dom"/>
</dbReference>
<dbReference type="InterPro" id="IPR029057">
    <property type="entry name" value="PRTase-like"/>
</dbReference>
<dbReference type="InterPro" id="IPR050054">
    <property type="entry name" value="UPRTase/APRTase"/>
</dbReference>
<dbReference type="NCBIfam" id="NF002636">
    <property type="entry name" value="PRK02304.1-5"/>
    <property type="match status" value="1"/>
</dbReference>
<dbReference type="PANTHER" id="PTHR32315">
    <property type="entry name" value="ADENINE PHOSPHORIBOSYLTRANSFERASE"/>
    <property type="match status" value="1"/>
</dbReference>
<dbReference type="PANTHER" id="PTHR32315:SF3">
    <property type="entry name" value="ADENINE PHOSPHORIBOSYLTRANSFERASE"/>
    <property type="match status" value="1"/>
</dbReference>
<dbReference type="Pfam" id="PF00156">
    <property type="entry name" value="Pribosyltran"/>
    <property type="match status" value="1"/>
</dbReference>
<dbReference type="SUPFAM" id="SSF53271">
    <property type="entry name" value="PRTase-like"/>
    <property type="match status" value="1"/>
</dbReference>
<feature type="chain" id="PRO_1000000320" description="Adenine phosphoribosyltransferase">
    <location>
        <begin position="1"/>
        <end position="170"/>
    </location>
</feature>
<evidence type="ECO:0000255" key="1">
    <source>
        <dbReference type="HAMAP-Rule" id="MF_00004"/>
    </source>
</evidence>
<accession>Q31AA3</accession>
<comment type="function">
    <text evidence="1">Catalyzes a salvage reaction resulting in the formation of AMP, that is energically less costly than de novo synthesis.</text>
</comment>
<comment type="catalytic activity">
    <reaction evidence="1">
        <text>AMP + diphosphate = 5-phospho-alpha-D-ribose 1-diphosphate + adenine</text>
        <dbReference type="Rhea" id="RHEA:16609"/>
        <dbReference type="ChEBI" id="CHEBI:16708"/>
        <dbReference type="ChEBI" id="CHEBI:33019"/>
        <dbReference type="ChEBI" id="CHEBI:58017"/>
        <dbReference type="ChEBI" id="CHEBI:456215"/>
        <dbReference type="EC" id="2.4.2.7"/>
    </reaction>
</comment>
<comment type="pathway">
    <text evidence="1">Purine metabolism; AMP biosynthesis via salvage pathway; AMP from adenine: step 1/1.</text>
</comment>
<comment type="subunit">
    <text evidence="1">Homodimer.</text>
</comment>
<comment type="subcellular location">
    <subcellularLocation>
        <location evidence="1">Cytoplasm</location>
    </subcellularLocation>
</comment>
<comment type="similarity">
    <text evidence="1">Belongs to the purine/pyrimidine phosphoribosyltransferase family.</text>
</comment>